<evidence type="ECO:0000250" key="1"/>
<evidence type="ECO:0000255" key="2"/>
<evidence type="ECO:0000269" key="3">
    <source>
    </source>
</evidence>
<evidence type="ECO:0000269" key="4">
    <source>
    </source>
</evidence>
<evidence type="ECO:0000269" key="5">
    <source>
    </source>
</evidence>
<evidence type="ECO:0000269" key="6">
    <source>
    </source>
</evidence>
<evidence type="ECO:0000269" key="7">
    <source>
    </source>
</evidence>
<evidence type="ECO:0000269" key="8">
    <source>
    </source>
</evidence>
<evidence type="ECO:0000269" key="9">
    <source>
    </source>
</evidence>
<evidence type="ECO:0000269" key="10">
    <source>
    </source>
</evidence>
<evidence type="ECO:0000269" key="11">
    <source>
    </source>
</evidence>
<evidence type="ECO:0000305" key="12"/>
<evidence type="ECO:0007744" key="13">
    <source>
    </source>
</evidence>
<accession>O04331</accession>
<protein>
    <recommendedName>
        <fullName>Prohibitin-3, mitochondrial</fullName>
        <shortName>Atphb3</shortName>
    </recommendedName>
    <alternativeName>
        <fullName>Protein ENHANCED ETHYLENE RESPONSE 3</fullName>
    </alternativeName>
</protein>
<name>PHB3_ARATH</name>
<keyword id="KW-0007">Acetylation</keyword>
<keyword id="KW-1003">Cell membrane</keyword>
<keyword id="KW-0963">Cytoplasm</keyword>
<keyword id="KW-0472">Membrane</keyword>
<keyword id="KW-0496">Mitochondrion</keyword>
<keyword id="KW-0999">Mitochondrion inner membrane</keyword>
<keyword id="KW-0539">Nucleus</keyword>
<keyword id="KW-1185">Reference proteome</keyword>
<keyword id="KW-0735">Signal-anchor</keyword>
<keyword id="KW-0812">Transmembrane</keyword>
<keyword id="KW-1133">Transmembrane helix</keyword>
<proteinExistence type="evidence at protein level"/>
<gene>
    <name type="primary">PHB3</name>
    <name type="synonym">EER3</name>
    <name type="ordered locus">At5g40770</name>
    <name type="ORF">K1B16.2</name>
</gene>
<organism>
    <name type="scientific">Arabidopsis thaliana</name>
    <name type="common">Mouse-ear cress</name>
    <dbReference type="NCBI Taxonomy" id="3702"/>
    <lineage>
        <taxon>Eukaryota</taxon>
        <taxon>Viridiplantae</taxon>
        <taxon>Streptophyta</taxon>
        <taxon>Embryophyta</taxon>
        <taxon>Tracheophyta</taxon>
        <taxon>Spermatophyta</taxon>
        <taxon>Magnoliopsida</taxon>
        <taxon>eudicotyledons</taxon>
        <taxon>Gunneridae</taxon>
        <taxon>Pentapetalae</taxon>
        <taxon>rosids</taxon>
        <taxon>malvids</taxon>
        <taxon>Brassicales</taxon>
        <taxon>Brassicaceae</taxon>
        <taxon>Camelineae</taxon>
        <taxon>Arabidopsis</taxon>
    </lineage>
</organism>
<comment type="function">
    <text evidence="1 6 7 9">Prohibitin probably acts as a holdase/unfoldase for the stabilization of newly synthesized mitochondrial proteins (By similarity). Necessary for mitochondrial and cell metabolism and biogenesis. Required to regulate the ethylene-mediated signaling; involved in growth maintenance in the presence of ethylene. Functions in nitric oxide (NO)-mediated responses and in hydrogen peroxide-induced NO accumulation.</text>
</comment>
<comment type="subunit">
    <text evidence="3 7 8">Component of a prohibitin multimeric complex in mitochondrial membranes.</text>
</comment>
<comment type="subcellular location">
    <subcellularLocation>
        <location evidence="5">Cell membrane</location>
    </subcellularLocation>
    <subcellularLocation>
        <location evidence="3 4 7 8 10 11">Mitochondrion inner membrane</location>
        <topology evidence="2">Single-pass type II membrane protein</topology>
    </subcellularLocation>
    <subcellularLocation>
        <location evidence="6">Nucleus</location>
    </subcellularLocation>
    <subcellularLocation>
        <location evidence="6">Cytoplasm</location>
    </subcellularLocation>
</comment>
<comment type="tissue specificity">
    <text>Mostly expressed in proliferative tissues, including vasculature, shoot and root apical tissues. Expressed in roots, stems, leaves and flowers (at protein level).</text>
</comment>
<comment type="disruption phenotype">
    <text evidence="6 7 9">Extreme constitutive ethylene response in air associated with a partial loss of ethylene-inducible gene expression and an increased ethylene production. Mitochondrial swelling, decreased meristematic cell production, increased cell division time and reduced cell expansion rates, leading to severe growth retardation. Reduced sensitivity to salt stress and defective in H(2)O(2)-induced nitric oxide (NO) accumulation, light-induced NO in cotyledons, abscisic acid (ABA)-induced NO accumulation and stomatal closure, and in auxin-induced lateral root formation.</text>
</comment>
<comment type="similarity">
    <text evidence="12">Belongs to the prohibitin family.</text>
</comment>
<reference key="1">
    <citation type="journal article" date="1997" name="Plant Mol. Biol.">
        <title>Characterization of the plant homologue of prohibitin, a gene associated with antiproliferative activity in mammalian cells.</title>
        <authorList>
            <person name="Snedden W.A."/>
            <person name="Fromm H."/>
        </authorList>
    </citation>
    <scope>NUCLEOTIDE SEQUENCE [MRNA]</scope>
    <scope>TISSUE SPECIFICITY</scope>
    <scope>SUBCELLULAR LOCATION</scope>
    <source>
        <strain>cv. Columbia</strain>
    </source>
</reference>
<reference key="2">
    <citation type="submission" date="1996-08" db="EMBL/GenBank/DDBJ databases">
        <title>Arabidopsis genes encoding prohibitin: importance for early development.</title>
        <authorList>
            <person name="Sun L."/>
            <person name="Goodman H.M."/>
        </authorList>
    </citation>
    <scope>NUCLEOTIDE SEQUENCE [MRNA]</scope>
    <source>
        <strain>cv. Columbia</strain>
    </source>
</reference>
<reference key="3">
    <citation type="journal article" date="1998" name="DNA Res.">
        <title>Structural analysis of Arabidopsis thaliana chromosome 5. VII. Sequence features of the regions of 1,013,767 bp covered by sixteen physically assigned P1 and TAC clones.</title>
        <authorList>
            <person name="Nakamura Y."/>
            <person name="Sato S."/>
            <person name="Asamizu E."/>
            <person name="Kaneko T."/>
            <person name="Kotani H."/>
            <person name="Miyajima N."/>
            <person name="Tabata S."/>
        </authorList>
    </citation>
    <scope>NUCLEOTIDE SEQUENCE [LARGE SCALE GENOMIC DNA]</scope>
    <source>
        <strain>cv. Columbia</strain>
    </source>
</reference>
<reference key="4">
    <citation type="journal article" date="2017" name="Plant J.">
        <title>Araport11: a complete reannotation of the Arabidopsis thaliana reference genome.</title>
        <authorList>
            <person name="Cheng C.Y."/>
            <person name="Krishnakumar V."/>
            <person name="Chan A.P."/>
            <person name="Thibaud-Nissen F."/>
            <person name="Schobel S."/>
            <person name="Town C.D."/>
        </authorList>
    </citation>
    <scope>GENOME REANNOTATION</scope>
    <source>
        <strain>cv. Columbia</strain>
    </source>
</reference>
<reference key="5">
    <citation type="journal article" date="2003" name="Science">
        <title>Empirical analysis of transcriptional activity in the Arabidopsis genome.</title>
        <authorList>
            <person name="Yamada K."/>
            <person name="Lim J."/>
            <person name="Dale J.M."/>
            <person name="Chen H."/>
            <person name="Shinn P."/>
            <person name="Palm C.J."/>
            <person name="Southwick A.M."/>
            <person name="Wu H.C."/>
            <person name="Kim C.J."/>
            <person name="Nguyen M."/>
            <person name="Pham P.K."/>
            <person name="Cheuk R.F."/>
            <person name="Karlin-Newmann G."/>
            <person name="Liu S.X."/>
            <person name="Lam B."/>
            <person name="Sakano H."/>
            <person name="Wu T."/>
            <person name="Yu G."/>
            <person name="Miranda M."/>
            <person name="Quach H.L."/>
            <person name="Tripp M."/>
            <person name="Chang C.H."/>
            <person name="Lee J.M."/>
            <person name="Toriumi M.J."/>
            <person name="Chan M.M."/>
            <person name="Tang C.C."/>
            <person name="Onodera C.S."/>
            <person name="Deng J.M."/>
            <person name="Akiyama K."/>
            <person name="Ansari Y."/>
            <person name="Arakawa T."/>
            <person name="Banh J."/>
            <person name="Banno F."/>
            <person name="Bowser L."/>
            <person name="Brooks S.Y."/>
            <person name="Carninci P."/>
            <person name="Chao Q."/>
            <person name="Choy N."/>
            <person name="Enju A."/>
            <person name="Goldsmith A.D."/>
            <person name="Gurjal M."/>
            <person name="Hansen N.F."/>
            <person name="Hayashizaki Y."/>
            <person name="Johnson-Hopson C."/>
            <person name="Hsuan V.W."/>
            <person name="Iida K."/>
            <person name="Karnes M."/>
            <person name="Khan S."/>
            <person name="Koesema E."/>
            <person name="Ishida J."/>
            <person name="Jiang P.X."/>
            <person name="Jones T."/>
            <person name="Kawai J."/>
            <person name="Kamiya A."/>
            <person name="Meyers C."/>
            <person name="Nakajima M."/>
            <person name="Narusaka M."/>
            <person name="Seki M."/>
            <person name="Sakurai T."/>
            <person name="Satou M."/>
            <person name="Tamse R."/>
            <person name="Vaysberg M."/>
            <person name="Wallender E.K."/>
            <person name="Wong C."/>
            <person name="Yamamura Y."/>
            <person name="Yuan S."/>
            <person name="Shinozaki K."/>
            <person name="Davis R.W."/>
            <person name="Theologis A."/>
            <person name="Ecker J.R."/>
        </authorList>
    </citation>
    <scope>NUCLEOTIDE SEQUENCE [LARGE SCALE MRNA]</scope>
    <source>
        <strain>cv. Columbia</strain>
    </source>
</reference>
<reference key="6">
    <citation type="submission" date="2002-03" db="EMBL/GenBank/DDBJ databases">
        <title>Full-length cDNA from Arabidopsis thaliana.</title>
        <authorList>
            <person name="Brover V.V."/>
            <person name="Troukhan M.E."/>
            <person name="Alexandrov N.A."/>
            <person name="Lu Y.-P."/>
            <person name="Flavell R.B."/>
            <person name="Feldmann K.A."/>
        </authorList>
    </citation>
    <scope>NUCLEOTIDE SEQUENCE [LARGE SCALE MRNA]</scope>
</reference>
<reference key="7">
    <citation type="journal article" date="2003" name="Biochim. Biophys. Acta">
        <title>Mitochondrial complex I from Arabidopsis and rice: orthologs of mammalian and fungal components coupled with plant-specific subunits.</title>
        <authorList>
            <person name="Heazlewood J.L."/>
            <person name="Howell K.A."/>
            <person name="Millar A.H."/>
        </authorList>
    </citation>
    <scope>SUBCELLULAR LOCATION</scope>
    <scope>IDENTIFICATION BY MASS SPECTROMETRY</scope>
    <scope>SUBUNIT</scope>
</reference>
<reference key="8">
    <citation type="journal article" date="2004" name="Mol. Cell. Proteomics">
        <title>Identification of new intrinsic proteins in Arabidopsis plasma membrane proteome.</title>
        <authorList>
            <person name="Marmagne A."/>
            <person name="Rouet M.-A."/>
            <person name="Ferro M."/>
            <person name="Rolland N."/>
            <person name="Alcon C."/>
            <person name="Joyard J."/>
            <person name="Garin J."/>
            <person name="Barbier-Brygoo H."/>
            <person name="Ephritikhine G."/>
        </authorList>
    </citation>
    <scope>IDENTIFICATION BY MASS SPECTROMETRY</scope>
    <scope>SUBCELLULAR LOCATION [LARGE SCALE ANALYSIS]</scope>
</reference>
<reference key="9">
    <citation type="journal article" date="2004" name="Plant Cell">
        <title>Experimental analysis of the Arabidopsis mitochondrial proteome highlights signaling and regulatory components, provides assessment of targeting prediction programs, and indicates plant-specific mitochondrial proteins.</title>
        <authorList>
            <person name="Heazlewood J.L."/>
            <person name="Tonti-Filippini J.S."/>
            <person name="Gout A.M."/>
            <person name="Day D.A."/>
            <person name="Whelan J."/>
            <person name="Millar A.H."/>
        </authorList>
    </citation>
    <scope>IDENTIFICATION BY MASS SPECTROMETRY</scope>
    <scope>SUBCELLULAR LOCATION [LARGE SCALE ANALYSIS]</scope>
    <source>
        <strain>cv. Landsberg erecta</strain>
    </source>
</reference>
<reference key="10">
    <citation type="journal article" date="2007" name="J. Exp. Bot.">
        <title>Mutational loss of the prohibitin AtPHB3 results in an extreme constitutive ethylene response phenotype coupled with partial loss of ethylene-inducible gene expression in Arabidopsis seedlings.</title>
        <authorList>
            <person name="Christians M.J."/>
            <person name="Larsen P.B."/>
        </authorList>
    </citation>
    <scope>FUNCTION</scope>
    <scope>DISRUPTION PHENOTYPE</scope>
    <scope>MUTAGENESIS OF ASP-165</scope>
    <scope>SUBCELLULAR LOCATION</scope>
    <scope>TISSUE SPECIFICITY</scope>
    <source>
        <strain>cv. Columbia</strain>
    </source>
</reference>
<reference key="11">
    <citation type="journal article" date="2007" name="Plant J.">
        <title>Mitochondrial type-I prohibitins of Arabidopsis thaliana are required for supporting proficient meristem development.</title>
        <authorList>
            <person name="Van Aken O."/>
            <person name="Pecenkova T."/>
            <person name="van de Cotte B."/>
            <person name="De Rycke R."/>
            <person name="Eeckhout D."/>
            <person name="Fromm H."/>
            <person name="De Jaeger G."/>
            <person name="Witters E."/>
            <person name="Beemster G.T.S."/>
            <person name="Inze D."/>
            <person name="Van Breusegem F."/>
        </authorList>
    </citation>
    <scope>FUNCTION</scope>
    <scope>DISRUPTION PHENOTYPE</scope>
    <scope>TISSUE SPECIFICITY</scope>
    <scope>SUBUNIT</scope>
    <scope>SUBCELLULAR LOCATION</scope>
    <scope>IDENTIFICATION BY MASS SPECTROMETRY</scope>
    <source>
        <strain>cv. Columbia</strain>
    </source>
</reference>
<reference key="12">
    <citation type="journal article" date="2008" name="J. Proteome Res.">
        <title>Resolving and identifying protein components of plant mitochondrial respiratory complexes using three dimensions of gel electrophoresis.</title>
        <authorList>
            <person name="Meyer E.H."/>
            <person name="Taylor N.L."/>
            <person name="Millar A.H."/>
        </authorList>
    </citation>
    <scope>IDENTIFICATION BY MASS SPECTROMETRY</scope>
    <scope>SUBCELLULAR LOCATION</scope>
    <scope>SUBUNIT</scope>
</reference>
<reference key="13">
    <citation type="journal article" date="2010" name="Plant Cell">
        <title>The Arabidopsis prohibitin gene PHB3 functions in nitric oxide-mediated responses and in hydrogen peroxide-induced nitric oxide accumulation.</title>
        <authorList>
            <person name="Wang Y."/>
            <person name="Ries A."/>
            <person name="Wu K."/>
            <person name="Yang A."/>
            <person name="Crawford N.M."/>
        </authorList>
    </citation>
    <scope>FUNCTION</scope>
    <scope>DISRUPTION PHENOTYPE</scope>
    <scope>MUTAGENESIS OF GLY-37</scope>
</reference>
<reference key="14">
    <citation type="journal article" date="2011" name="Plant Physiol.">
        <title>Defining the protein complex proteome of plant mitochondria.</title>
        <authorList>
            <person name="Klodmann J."/>
            <person name="Senkler M."/>
            <person name="Rode C."/>
            <person name="Braun H.-P."/>
        </authorList>
    </citation>
    <scope>IDENTIFICATION BY MASS SPECTROMETRY</scope>
    <scope>SUBCELLULAR LOCATION [LARGE SCALE ANALYSIS]</scope>
</reference>
<reference key="15">
    <citation type="journal article" date="2012" name="Mol. Cell. Proteomics">
        <title>Comparative large-scale characterisation of plant vs. mammal proteins reveals similar and idiosyncratic N-alpha acetylation features.</title>
        <authorList>
            <person name="Bienvenut W.V."/>
            <person name="Sumpton D."/>
            <person name="Martinez A."/>
            <person name="Lilla S."/>
            <person name="Espagne C."/>
            <person name="Meinnel T."/>
            <person name="Giglione C."/>
        </authorList>
    </citation>
    <scope>ACETYLATION [LARGE SCALE ANALYSIS] AT GLY-2</scope>
    <scope>CLEAVAGE OF INITIATOR METHIONINE [LARGE SCALE ANALYSIS]</scope>
    <scope>IDENTIFICATION BY MASS SPECTROMETRY [LARGE SCALE ANALYSIS]</scope>
</reference>
<feature type="initiator methionine" description="Removed" evidence="13">
    <location>
        <position position="1"/>
    </location>
</feature>
<feature type="chain" id="PRO_0000420598" description="Prohibitin-3, mitochondrial">
    <location>
        <begin position="2"/>
        <end position="277"/>
    </location>
</feature>
<feature type="topological domain" description="Mitochondrial matrix" evidence="2">
    <location>
        <begin position="2"/>
        <end position="6"/>
    </location>
</feature>
<feature type="transmembrane region" description="Helical; Signal-anchor for type II membrane protein" evidence="2">
    <location>
        <begin position="7"/>
        <end position="28"/>
    </location>
</feature>
<feature type="topological domain" description="Mitochondrial intermembrane" evidence="2">
    <location>
        <begin position="29"/>
        <end position="277"/>
    </location>
</feature>
<feature type="modified residue" description="N-acetylglycine" evidence="13">
    <location>
        <position position="2"/>
    </location>
</feature>
<feature type="mutagenesis site" description="In phb3-3; reduced sensitivity to salt stress and defective in H(2)O(2)-induced nitric oxide (NO) accumulation, light-induced NO in cotyledons, abscisic acid (ABA)-induced NO accumulation and stomatal closure, and in auxin-induced lateral root formation." evidence="9">
    <original>G</original>
    <variation>D</variation>
    <location>
        <position position="37"/>
    </location>
</feature>
<feature type="mutagenesis site" description="In eer3-1; increased sensitivity and profound exaggeration of response to ethylene, as well as increased ethylene production." evidence="6">
    <original>D</original>
    <variation>N</variation>
    <location>
        <position position="165"/>
    </location>
</feature>
<sequence length="277" mass="30400">MGSQQAAVSFLSNLAKAAFGLGTAATVLNTSLFTVDGGERAVIFDRFRGVMDQTVGEGTHFLIPILQRPHIFDIRTKPHTFSSISGTKDLQMVNLTLRVLSRPEVSRLPYIFQTLGLEYDEKVLPSIGNEVLKAVVAQFNADQLLTERPHVSALVRESLITRAKDFNIVLDDVAITHLSYGVEFSRAVEQKQVAQQEAERSKFVVMKADQERRAAVIRAEGESEAAQLISDATAKAGMGLIELRRIEASREIASTLARSPNVAYLPGGQSMLFALNR</sequence>
<dbReference type="EMBL" id="U69155">
    <property type="protein sequence ID" value="AAC49691.1"/>
    <property type="molecule type" value="mRNA"/>
</dbReference>
<dbReference type="EMBL" id="U66593">
    <property type="protein sequence ID" value="AAD00157.1"/>
    <property type="molecule type" value="mRNA"/>
</dbReference>
<dbReference type="EMBL" id="AB015470">
    <property type="protein sequence ID" value="BAB08838.1"/>
    <property type="molecule type" value="Genomic_DNA"/>
</dbReference>
<dbReference type="EMBL" id="CP002688">
    <property type="protein sequence ID" value="AED94592.1"/>
    <property type="molecule type" value="Genomic_DNA"/>
</dbReference>
<dbReference type="EMBL" id="AY054499">
    <property type="protein sequence ID" value="AAK96690.1"/>
    <property type="molecule type" value="mRNA"/>
</dbReference>
<dbReference type="EMBL" id="AY114631">
    <property type="protein sequence ID" value="AAM47950.1"/>
    <property type="molecule type" value="mRNA"/>
</dbReference>
<dbReference type="EMBL" id="AY087641">
    <property type="protein sequence ID" value="AAM65180.1"/>
    <property type="molecule type" value="mRNA"/>
</dbReference>
<dbReference type="RefSeq" id="NP_198893.1">
    <property type="nucleotide sequence ID" value="NM_123442.5"/>
</dbReference>
<dbReference type="SMR" id="O04331"/>
<dbReference type="BioGRID" id="19328">
    <property type="interactions" value="30"/>
</dbReference>
<dbReference type="FunCoup" id="O04331">
    <property type="interactions" value="3395"/>
</dbReference>
<dbReference type="IntAct" id="O04331">
    <property type="interactions" value="3"/>
</dbReference>
<dbReference type="STRING" id="3702.O04331"/>
<dbReference type="iPTMnet" id="O04331"/>
<dbReference type="PaxDb" id="3702-AT5G40770.1"/>
<dbReference type="ProMEX" id="O04331"/>
<dbReference type="ProteomicsDB" id="235078"/>
<dbReference type="EnsemblPlants" id="AT5G40770.1">
    <property type="protein sequence ID" value="AT5G40770.1"/>
    <property type="gene ID" value="AT5G40770"/>
</dbReference>
<dbReference type="GeneID" id="834077"/>
<dbReference type="Gramene" id="AT5G40770.1">
    <property type="protein sequence ID" value="AT5G40770.1"/>
    <property type="gene ID" value="AT5G40770"/>
</dbReference>
<dbReference type="KEGG" id="ath:AT5G40770"/>
<dbReference type="Araport" id="AT5G40770"/>
<dbReference type="TAIR" id="AT5G40770">
    <property type="gene designation" value="PHB3"/>
</dbReference>
<dbReference type="eggNOG" id="KOG3083">
    <property type="taxonomic scope" value="Eukaryota"/>
</dbReference>
<dbReference type="HOGENOM" id="CLU_047969_0_2_1"/>
<dbReference type="InParanoid" id="O04331"/>
<dbReference type="OMA" id="VPFIQNP"/>
<dbReference type="OrthoDB" id="275637at2759"/>
<dbReference type="PhylomeDB" id="O04331"/>
<dbReference type="CD-CODE" id="4299E36E">
    <property type="entry name" value="Nucleolus"/>
</dbReference>
<dbReference type="PRO" id="PR:O04331"/>
<dbReference type="Proteomes" id="UP000006548">
    <property type="component" value="Chromosome 5"/>
</dbReference>
<dbReference type="ExpressionAtlas" id="O04331">
    <property type="expression patterns" value="baseline and differential"/>
</dbReference>
<dbReference type="GO" id="GO:0009507">
    <property type="term" value="C:chloroplast"/>
    <property type="evidence" value="ECO:0000314"/>
    <property type="project" value="TAIR"/>
</dbReference>
<dbReference type="GO" id="GO:0009941">
    <property type="term" value="C:chloroplast envelope"/>
    <property type="evidence" value="ECO:0000314"/>
    <property type="project" value="TAIR"/>
</dbReference>
<dbReference type="GO" id="GO:0005743">
    <property type="term" value="C:mitochondrial inner membrane"/>
    <property type="evidence" value="ECO:0007669"/>
    <property type="project" value="UniProtKB-SubCell"/>
</dbReference>
<dbReference type="GO" id="GO:0005739">
    <property type="term" value="C:mitochondrion"/>
    <property type="evidence" value="ECO:0000314"/>
    <property type="project" value="TAIR"/>
</dbReference>
<dbReference type="GO" id="GO:0005730">
    <property type="term" value="C:nucleolus"/>
    <property type="evidence" value="ECO:0007005"/>
    <property type="project" value="TAIR"/>
</dbReference>
<dbReference type="GO" id="GO:0000325">
    <property type="term" value="C:plant-type vacuole"/>
    <property type="evidence" value="ECO:0007005"/>
    <property type="project" value="TAIR"/>
</dbReference>
<dbReference type="GO" id="GO:0005886">
    <property type="term" value="C:plasma membrane"/>
    <property type="evidence" value="ECO:0007005"/>
    <property type="project" value="TAIR"/>
</dbReference>
<dbReference type="GO" id="GO:0044877">
    <property type="term" value="F:protein-containing complex binding"/>
    <property type="evidence" value="ECO:0000353"/>
    <property type="project" value="TAIR"/>
</dbReference>
<dbReference type="GO" id="GO:0051301">
    <property type="term" value="P:cell division"/>
    <property type="evidence" value="ECO:0000315"/>
    <property type="project" value="TAIR"/>
</dbReference>
<dbReference type="GO" id="GO:0042742">
    <property type="term" value="P:defense response to bacterium"/>
    <property type="evidence" value="ECO:0000315"/>
    <property type="project" value="TAIR"/>
</dbReference>
<dbReference type="GO" id="GO:0048527">
    <property type="term" value="P:lateral root development"/>
    <property type="evidence" value="ECO:0000315"/>
    <property type="project" value="TAIR"/>
</dbReference>
<dbReference type="GO" id="GO:0007005">
    <property type="term" value="P:mitochondrion organization"/>
    <property type="evidence" value="ECO:0000315"/>
    <property type="project" value="TAIR"/>
</dbReference>
<dbReference type="GO" id="GO:0051782">
    <property type="term" value="P:negative regulation of cell division"/>
    <property type="evidence" value="ECO:0000315"/>
    <property type="project" value="TAIR"/>
</dbReference>
<dbReference type="GO" id="GO:0009733">
    <property type="term" value="P:response to auxin"/>
    <property type="evidence" value="ECO:0000270"/>
    <property type="project" value="TAIR"/>
</dbReference>
<dbReference type="GO" id="GO:0009723">
    <property type="term" value="P:response to ethylene"/>
    <property type="evidence" value="ECO:0000315"/>
    <property type="project" value="UniProtKB"/>
</dbReference>
<dbReference type="GO" id="GO:0071731">
    <property type="term" value="P:response to nitric oxide"/>
    <property type="evidence" value="ECO:0000315"/>
    <property type="project" value="TAIR"/>
</dbReference>
<dbReference type="GO" id="GO:0009651">
    <property type="term" value="P:response to salt stress"/>
    <property type="evidence" value="ECO:0000315"/>
    <property type="project" value="TAIR"/>
</dbReference>
<dbReference type="GO" id="GO:0009697">
    <property type="term" value="P:salicylic acid biosynthetic process"/>
    <property type="evidence" value="ECO:0000315"/>
    <property type="project" value="TAIR"/>
</dbReference>
<dbReference type="CDD" id="cd03401">
    <property type="entry name" value="SPFH_prohibitin"/>
    <property type="match status" value="1"/>
</dbReference>
<dbReference type="FunFam" id="3.30.479.30:FF:000001">
    <property type="entry name" value="Prohibitin 2"/>
    <property type="match status" value="1"/>
</dbReference>
<dbReference type="Gene3D" id="3.30.479.30">
    <property type="entry name" value="Band 7 domain"/>
    <property type="match status" value="1"/>
</dbReference>
<dbReference type="InterPro" id="IPR001107">
    <property type="entry name" value="Band_7"/>
</dbReference>
<dbReference type="InterPro" id="IPR036013">
    <property type="entry name" value="Band_7/SPFH_dom_sf"/>
</dbReference>
<dbReference type="InterPro" id="IPR000163">
    <property type="entry name" value="Prohibitin"/>
</dbReference>
<dbReference type="PANTHER" id="PTHR23222">
    <property type="entry name" value="PROHIBITIN"/>
    <property type="match status" value="1"/>
</dbReference>
<dbReference type="PANTHER" id="PTHR23222:SF17">
    <property type="entry name" value="PROHIBITIN-3, MITOCHONDRIAL-RELATED"/>
    <property type="match status" value="1"/>
</dbReference>
<dbReference type="Pfam" id="PF01145">
    <property type="entry name" value="Band_7"/>
    <property type="match status" value="1"/>
</dbReference>
<dbReference type="PRINTS" id="PR00679">
    <property type="entry name" value="PROHIBITIN"/>
</dbReference>
<dbReference type="SMART" id="SM00244">
    <property type="entry name" value="PHB"/>
    <property type="match status" value="1"/>
</dbReference>
<dbReference type="SUPFAM" id="SSF117892">
    <property type="entry name" value="Band 7/SPFH domain"/>
    <property type="match status" value="1"/>
</dbReference>